<gene>
    <name type="primary">PVA11</name>
    <name type="synonym">VAP27</name>
    <name type="synonym">VAP27-1</name>
    <name type="ordered locus">At3g60600</name>
    <name type="ORF">T4C21.10</name>
</gene>
<accession>Q8VZ95</accession>
<accession>B9DHW7</accession>
<accession>Q2V3M6</accession>
<accession>Q2V3M7</accession>
<accession>Q8LDM1</accession>
<accession>Q9M003</accession>
<protein>
    <recommendedName>
        <fullName>Vesicle-associated protein 1-1</fullName>
    </recommendedName>
    <alternativeName>
        <fullName>Plant VAP homolog 11</fullName>
        <shortName>AtPVA11</shortName>
    </alternativeName>
    <alternativeName>
        <fullName>VAMP-associated protein 1-1</fullName>
    </alternativeName>
    <alternativeName>
        <fullName>Vesicle-associated protein 27-1</fullName>
    </alternativeName>
    <component>
        <recommendedName>
            <fullName>Vesicle-associated protein 1-1, N-terminally processed</fullName>
        </recommendedName>
    </component>
</protein>
<dbReference type="EMBL" id="AY364005">
    <property type="protein sequence ID" value="AAQ63968.1"/>
    <property type="molecule type" value="mRNA"/>
</dbReference>
<dbReference type="EMBL" id="AL162295">
    <property type="protein sequence ID" value="CAB82664.1"/>
    <property type="status" value="ALT_SEQ"/>
    <property type="molecule type" value="Genomic_DNA"/>
</dbReference>
<dbReference type="EMBL" id="CP002686">
    <property type="protein sequence ID" value="AEE80086.1"/>
    <property type="molecule type" value="Genomic_DNA"/>
</dbReference>
<dbReference type="EMBL" id="CP002686">
    <property type="protein sequence ID" value="AEE80087.1"/>
    <property type="molecule type" value="Genomic_DNA"/>
</dbReference>
<dbReference type="EMBL" id="CP002686">
    <property type="protein sequence ID" value="AEE80088.1"/>
    <property type="molecule type" value="Genomic_DNA"/>
</dbReference>
<dbReference type="EMBL" id="AY065144">
    <property type="protein sequence ID" value="AAL38320.1"/>
    <property type="molecule type" value="mRNA"/>
</dbReference>
<dbReference type="EMBL" id="BT006297">
    <property type="protein sequence ID" value="AAP13405.1"/>
    <property type="molecule type" value="mRNA"/>
</dbReference>
<dbReference type="EMBL" id="BX822165">
    <property type="status" value="NOT_ANNOTATED_CDS"/>
    <property type="molecule type" value="mRNA"/>
</dbReference>
<dbReference type="EMBL" id="BX824970">
    <property type="status" value="NOT_ANNOTATED_CDS"/>
    <property type="molecule type" value="mRNA"/>
</dbReference>
<dbReference type="EMBL" id="AY085922">
    <property type="protein sequence ID" value="AAM63134.1"/>
    <property type="status" value="ALT_SEQ"/>
    <property type="molecule type" value="mRNA"/>
</dbReference>
<dbReference type="EMBL" id="AK317675">
    <property type="protein sequence ID" value="BAH20334.1"/>
    <property type="molecule type" value="mRNA"/>
</dbReference>
<dbReference type="PIR" id="T47871">
    <property type="entry name" value="T47871"/>
</dbReference>
<dbReference type="RefSeq" id="NP_001030903.1">
    <molecule id="Q8VZ95-3"/>
    <property type="nucleotide sequence ID" value="NM_001035826.1"/>
</dbReference>
<dbReference type="RefSeq" id="NP_001030904.1">
    <molecule id="Q8VZ95-2"/>
    <property type="nucleotide sequence ID" value="NM_001035827.1"/>
</dbReference>
<dbReference type="RefSeq" id="NP_567101.1">
    <molecule id="Q8VZ95-1"/>
    <property type="nucleotide sequence ID" value="NM_115924.4"/>
</dbReference>
<dbReference type="SMR" id="Q8VZ95"/>
<dbReference type="BioGRID" id="10545">
    <property type="interactions" value="106"/>
</dbReference>
<dbReference type="FunCoup" id="Q8VZ95">
    <property type="interactions" value="3788"/>
</dbReference>
<dbReference type="IntAct" id="Q8VZ95">
    <property type="interactions" value="90"/>
</dbReference>
<dbReference type="STRING" id="3702.Q8VZ95"/>
<dbReference type="iPTMnet" id="Q8VZ95"/>
<dbReference type="SwissPalm" id="Q8VZ95"/>
<dbReference type="PaxDb" id="3702-AT3G60600.1"/>
<dbReference type="ProteomicsDB" id="228551">
    <molecule id="Q8VZ95-1"/>
</dbReference>
<dbReference type="EnsemblPlants" id="AT3G60600.1">
    <molecule id="Q8VZ95-1"/>
    <property type="protein sequence ID" value="AT3G60600.1"/>
    <property type="gene ID" value="AT3G60600"/>
</dbReference>
<dbReference type="EnsemblPlants" id="AT3G60600.2">
    <molecule id="Q8VZ95-3"/>
    <property type="protein sequence ID" value="AT3G60600.2"/>
    <property type="gene ID" value="AT3G60600"/>
</dbReference>
<dbReference type="EnsemblPlants" id="AT3G60600.3">
    <molecule id="Q8VZ95-2"/>
    <property type="protein sequence ID" value="AT3G60600.3"/>
    <property type="gene ID" value="AT3G60600"/>
</dbReference>
<dbReference type="GeneID" id="825231"/>
<dbReference type="Gramene" id="AT3G60600.1">
    <molecule id="Q8VZ95-1"/>
    <property type="protein sequence ID" value="AT3G60600.1"/>
    <property type="gene ID" value="AT3G60600"/>
</dbReference>
<dbReference type="Gramene" id="AT3G60600.2">
    <molecule id="Q8VZ95-3"/>
    <property type="protein sequence ID" value="AT3G60600.2"/>
    <property type="gene ID" value="AT3G60600"/>
</dbReference>
<dbReference type="Gramene" id="AT3G60600.3">
    <molecule id="Q8VZ95-2"/>
    <property type="protein sequence ID" value="AT3G60600.3"/>
    <property type="gene ID" value="AT3G60600"/>
</dbReference>
<dbReference type="KEGG" id="ath:AT3G60600"/>
<dbReference type="Araport" id="AT3G60600"/>
<dbReference type="TAIR" id="AT3G60600">
    <property type="gene designation" value="VAP27-1"/>
</dbReference>
<dbReference type="eggNOG" id="KOG0439">
    <property type="taxonomic scope" value="Eukaryota"/>
</dbReference>
<dbReference type="HOGENOM" id="CLU_036554_1_0_1"/>
<dbReference type="InParanoid" id="Q8VZ95"/>
<dbReference type="OMA" id="VNQEEVW"/>
<dbReference type="PhylomeDB" id="Q8VZ95"/>
<dbReference type="CD-CODE" id="4299E36E">
    <property type="entry name" value="Nucleolus"/>
</dbReference>
<dbReference type="PRO" id="PR:Q8VZ95"/>
<dbReference type="Proteomes" id="UP000006548">
    <property type="component" value="Chromosome 3"/>
</dbReference>
<dbReference type="ExpressionAtlas" id="Q8VZ95">
    <property type="expression patterns" value="baseline and differential"/>
</dbReference>
<dbReference type="GO" id="GO:0005829">
    <property type="term" value="C:cytosol"/>
    <property type="evidence" value="ECO:0007005"/>
    <property type="project" value="TAIR"/>
</dbReference>
<dbReference type="GO" id="GO:0005783">
    <property type="term" value="C:endoplasmic reticulum"/>
    <property type="evidence" value="ECO:0007005"/>
    <property type="project" value="TAIR"/>
</dbReference>
<dbReference type="GO" id="GO:0005789">
    <property type="term" value="C:endoplasmic reticulum membrane"/>
    <property type="evidence" value="ECO:0000314"/>
    <property type="project" value="TAIR"/>
</dbReference>
<dbReference type="GO" id="GO:0005886">
    <property type="term" value="C:plasma membrane"/>
    <property type="evidence" value="ECO:0007005"/>
    <property type="project" value="TAIR"/>
</dbReference>
<dbReference type="GO" id="GO:0000326">
    <property type="term" value="C:protein storage vacuole"/>
    <property type="evidence" value="ECO:0000314"/>
    <property type="project" value="TAIR"/>
</dbReference>
<dbReference type="GO" id="GO:0032586">
    <property type="term" value="C:protein storage vacuole membrane"/>
    <property type="evidence" value="ECO:0007669"/>
    <property type="project" value="UniProtKB-SubCell"/>
</dbReference>
<dbReference type="GO" id="GO:0046907">
    <property type="term" value="P:intracellular transport"/>
    <property type="evidence" value="ECO:0000304"/>
    <property type="project" value="TAIR"/>
</dbReference>
<dbReference type="FunFam" id="2.60.40.10:FF:000813">
    <property type="entry name" value="Vesicle-associated protein 1-1"/>
    <property type="match status" value="1"/>
</dbReference>
<dbReference type="Gene3D" id="2.60.40.10">
    <property type="entry name" value="Immunoglobulins"/>
    <property type="match status" value="1"/>
</dbReference>
<dbReference type="InterPro" id="IPR013783">
    <property type="entry name" value="Ig-like_fold"/>
</dbReference>
<dbReference type="InterPro" id="IPR000535">
    <property type="entry name" value="MSP_dom"/>
</dbReference>
<dbReference type="InterPro" id="IPR008962">
    <property type="entry name" value="PapD-like_sf"/>
</dbReference>
<dbReference type="InterPro" id="IPR016763">
    <property type="entry name" value="VAP"/>
</dbReference>
<dbReference type="PANTHER" id="PTHR10809">
    <property type="entry name" value="VESICLE-ASSOCIATED MEMBRANE PROTEIN-ASSOCIATED PROTEIN"/>
    <property type="match status" value="1"/>
</dbReference>
<dbReference type="PANTHER" id="PTHR10809:SF117">
    <property type="entry name" value="VESICLE-ASSOCIATED PROTEIN 1-1-RELATED"/>
    <property type="match status" value="1"/>
</dbReference>
<dbReference type="Pfam" id="PF00635">
    <property type="entry name" value="Motile_Sperm"/>
    <property type="match status" value="1"/>
</dbReference>
<dbReference type="PIRSF" id="PIRSF019693">
    <property type="entry name" value="VAMP-associated"/>
    <property type="match status" value="1"/>
</dbReference>
<dbReference type="SUPFAM" id="SSF49354">
    <property type="entry name" value="PapD-like"/>
    <property type="match status" value="1"/>
</dbReference>
<dbReference type="PROSITE" id="PS50202">
    <property type="entry name" value="MSP"/>
    <property type="match status" value="1"/>
</dbReference>
<keyword id="KW-0007">Acetylation</keyword>
<keyword id="KW-0025">Alternative splicing</keyword>
<keyword id="KW-0175">Coiled coil</keyword>
<keyword id="KW-0256">Endoplasmic reticulum</keyword>
<keyword id="KW-0945">Host-virus interaction</keyword>
<keyword id="KW-0472">Membrane</keyword>
<keyword id="KW-0597">Phosphoprotein</keyword>
<keyword id="KW-1185">Reference proteome</keyword>
<keyword id="KW-0812">Transmembrane</keyword>
<keyword id="KW-1133">Transmembrane helix</keyword>
<keyword id="KW-0926">Vacuole</keyword>
<feature type="chain" id="PRO_0000425783" description="Vesicle-associated protein 1-1">
    <location>
        <begin position="1"/>
        <end position="256"/>
    </location>
</feature>
<feature type="initiator methionine" description="Removed; alternate" evidence="11">
    <location>
        <position position="1"/>
    </location>
</feature>
<feature type="chain" id="PRO_0000402169" description="Vesicle-associated protein 1-1, N-terminally processed">
    <location>
        <begin position="2"/>
        <end position="256"/>
    </location>
</feature>
<feature type="topological domain" description="Cytoplasmic" evidence="3">
    <location>
        <begin position="1"/>
        <end position="232"/>
    </location>
</feature>
<feature type="transmembrane region" description="Helical; Anchor for type IV membrane protein" evidence="3">
    <location>
        <begin position="233"/>
        <end position="253"/>
    </location>
</feature>
<feature type="domain" description="MSP" evidence="4">
    <location>
        <begin position="22"/>
        <end position="142"/>
    </location>
</feature>
<feature type="region of interest" description="Disordered" evidence="5">
    <location>
        <begin position="142"/>
        <end position="169"/>
    </location>
</feature>
<feature type="coiled-coil region" evidence="3">
    <location>
        <begin position="187"/>
        <end position="232"/>
    </location>
</feature>
<feature type="compositionally biased region" description="Polar residues" evidence="5">
    <location>
        <begin position="157"/>
        <end position="169"/>
    </location>
</feature>
<feature type="modified residue" description="N-acetylmethionine" evidence="1">
    <location>
        <position position="1"/>
    </location>
</feature>
<feature type="modified residue" description="N-acetylserine; in Vesicle-associated protein 1-1, N-terminally processed" evidence="11">
    <location>
        <position position="2"/>
    </location>
</feature>
<feature type="modified residue" description="Phosphoserine" evidence="2">
    <location>
        <position position="149"/>
    </location>
</feature>
<feature type="splice variant" id="VSP_040252" description="In isoform 2." evidence="9">
    <original>FERFIVDNKAGHQENTSEARALITKLTEEKQSAIQLNNRLQRELDQLRRESKKSQ</original>
    <variation>IFMFNFSLRDLSWTTRLDIKKTHLRYFSQFFQVCHRQNHVTSSFAFALFKTDFWR</variation>
    <location>
        <begin position="176"/>
        <end position="230"/>
    </location>
</feature>
<feature type="splice variant" id="VSP_040253" description="In isoform 3." evidence="9">
    <original>ARALITKLTEEKQSAIQLNNRLQR</original>
    <variation>VFFTILPSLSPSKPCDIIFCFCSV</variation>
    <location>
        <begin position="194"/>
        <end position="217"/>
    </location>
</feature>
<feature type="splice variant" id="VSP_040254" description="In isoform 3." evidence="9">
    <location>
        <begin position="218"/>
        <end position="256"/>
    </location>
</feature>
<feature type="splice variant" id="VSP_040255" description="In isoform 2." evidence="9">
    <location>
        <begin position="231"/>
        <end position="256"/>
    </location>
</feature>
<feature type="mutagenesis site" description="Loss of interaction with NET3C and no ER-plasma membrane association." evidence="8">
    <original>KTT</original>
    <variation>NAA</variation>
    <location>
        <begin position="59"/>
        <end position="61"/>
    </location>
</feature>
<feature type="sequence conflict" description="In Ref. 6; AAM63134." evidence="10" ref="6">
    <original>R</original>
    <variation>Q</variation>
    <location>
        <position position="146"/>
    </location>
</feature>
<organism>
    <name type="scientific">Arabidopsis thaliana</name>
    <name type="common">Mouse-ear cress</name>
    <dbReference type="NCBI Taxonomy" id="3702"/>
    <lineage>
        <taxon>Eukaryota</taxon>
        <taxon>Viridiplantae</taxon>
        <taxon>Streptophyta</taxon>
        <taxon>Embryophyta</taxon>
        <taxon>Tracheophyta</taxon>
        <taxon>Spermatophyta</taxon>
        <taxon>Magnoliopsida</taxon>
        <taxon>eudicotyledons</taxon>
        <taxon>Gunneridae</taxon>
        <taxon>Pentapetalae</taxon>
        <taxon>rosids</taxon>
        <taxon>malvids</taxon>
        <taxon>Brassicales</taxon>
        <taxon>Brassicaceae</taxon>
        <taxon>Camelineae</taxon>
        <taxon>Arabidopsis</taxon>
    </lineage>
</organism>
<comment type="function">
    <text evidence="8">Part of a membrane-cytoskeletal adapter complex that forms a bridge between the endoplasmic reticulum and the plasma membrane. Associates with microtubules.</text>
</comment>
<comment type="subunit">
    <text evidence="6 8">Homodimer or homooligomer (PubMed:24909329). Interacts with the cowpea mosaic virus (CPMV) NTP-binding protein (NTB) (PubMed:11907339). Interacts with NET3C (PubMed:24909329).</text>
</comment>
<comment type="interaction">
    <interactant intactId="EBI-2010972">
        <id>Q8VZ95</id>
    </interactant>
    <interactant intactId="EBI-4444417">
        <id>Q84W04</id>
        <label>At1g12390</label>
    </interactant>
    <organismsDiffer>false</organismsDiffer>
    <experiments>2</experiments>
</comment>
<comment type="interaction">
    <interactant intactId="EBI-2010972">
        <id>Q8VZ95</id>
    </interactant>
    <interactant intactId="EBI-4436589">
        <id>Q9SHG7</id>
        <label>At1g17080</label>
    </interactant>
    <organismsDiffer>false</organismsDiffer>
    <experiments>3</experiments>
</comment>
<comment type="interaction">
    <interactant intactId="EBI-2010972">
        <id>Q8VZ95</id>
    </interactant>
    <interactant intactId="EBI-4430604">
        <id>Q9LXV1</id>
        <label>At5g12880</label>
    </interactant>
    <organismsDiffer>false</organismsDiffer>
    <experiments>3</experiments>
</comment>
<comment type="interaction">
    <interactant intactId="EBI-2010972">
        <id>Q8VZ95</id>
    </interactant>
    <interactant intactId="EBI-4434233">
        <id>P93004</id>
        <label>PIP2-7</label>
    </interactant>
    <organismsDiffer>false</organismsDiffer>
    <experiments>3</experiments>
</comment>
<comment type="subcellular location">
    <subcellularLocation>
        <location evidence="7 8">Endoplasmic reticulum membrane</location>
        <topology evidence="7">Single-pass type IV membrane protein</topology>
    </subcellularLocation>
    <subcellularLocation>
        <location evidence="7">Protein storage vacuole membrane</location>
        <topology evidence="7">Single-pass type IV membrane protein</topology>
        <orientation evidence="7">Cytoplasmic side</orientation>
    </subcellularLocation>
    <text evidence="8">Localizes to immobile punctate structures reminiscent of the ER-plasma membrane contact sites.</text>
</comment>
<comment type="alternative products">
    <event type="alternative splicing"/>
    <isoform>
        <id>Q8VZ95-1</id>
        <name>1</name>
        <sequence type="displayed"/>
    </isoform>
    <isoform>
        <id>Q8VZ95-2</id>
        <name>2</name>
        <sequence type="described" ref="VSP_040252 VSP_040255"/>
    </isoform>
    <isoform>
        <id>Q8VZ95-3</id>
        <name>3</name>
        <sequence type="described" ref="VSP_040253 VSP_040254"/>
    </isoform>
</comment>
<comment type="similarity">
    <text evidence="10">Belongs to the VAMP-associated protein (VAP) (TC 9.B.17) family.</text>
</comment>
<comment type="sequence caution" evidence="10">
    <conflict type="erroneous initiation">
        <sequence resource="EMBL-CDS" id="AAM63134"/>
    </conflict>
    <text>Truncated N-terminus.</text>
</comment>
<comment type="sequence caution" evidence="10">
    <conflict type="frameshift">
        <sequence resource="EMBL-CDS" id="AAM63134"/>
    </conflict>
</comment>
<comment type="sequence caution" evidence="10">
    <conflict type="miscellaneous discrepancy">
        <sequence resource="EMBL" id="BX824970"/>
    </conflict>
    <text>Sequencing errors.</text>
</comment>
<comment type="sequence caution" evidence="10">
    <conflict type="erroneous gene model prediction">
        <sequence resource="EMBL-CDS" id="CAB82664"/>
    </conflict>
</comment>
<name>VAP11_ARATH</name>
<proteinExistence type="evidence at protein level"/>
<evidence type="ECO:0000250" key="1">
    <source>
        <dbReference type="UniProtKB" id="B9DHD7"/>
    </source>
</evidence>
<evidence type="ECO:0000250" key="2">
    <source>
        <dbReference type="UniProtKB" id="Q9SHC8"/>
    </source>
</evidence>
<evidence type="ECO:0000255" key="3"/>
<evidence type="ECO:0000255" key="4">
    <source>
        <dbReference type="PROSITE-ProRule" id="PRU00132"/>
    </source>
</evidence>
<evidence type="ECO:0000256" key="5">
    <source>
        <dbReference type="SAM" id="MobiDB-lite"/>
    </source>
</evidence>
<evidence type="ECO:0000269" key="6">
    <source>
    </source>
</evidence>
<evidence type="ECO:0000269" key="7">
    <source>
    </source>
</evidence>
<evidence type="ECO:0000269" key="8">
    <source>
    </source>
</evidence>
<evidence type="ECO:0000303" key="9">
    <source>
    </source>
</evidence>
<evidence type="ECO:0000305" key="10"/>
<evidence type="ECO:0007744" key="11">
    <source>
    </source>
</evidence>
<reference key="1">
    <citation type="journal article" date="2002" name="J. Gen. Virol.">
        <title>Characterization of plant proteins that interact with cowpea mosaic virus '60K' protein in the yeast two-hybrid system.</title>
        <authorList>
            <person name="Carette J.E."/>
            <person name="Verver J."/>
            <person name="Martens J."/>
            <person name="van Kampen T."/>
            <person name="Wellink J."/>
            <person name="van Kammen A."/>
        </authorList>
    </citation>
    <scope>NUCLEOTIDE SEQUENCE [MRNA]</scope>
    <scope>INTERACTION WITH COWPEA MOSAIC VIRUS NTB PROTEIN</scope>
</reference>
<reference key="2">
    <citation type="journal article" date="2000" name="Nature">
        <title>Sequence and analysis of chromosome 3 of the plant Arabidopsis thaliana.</title>
        <authorList>
            <person name="Salanoubat M."/>
            <person name="Lemcke K."/>
            <person name="Rieger M."/>
            <person name="Ansorge W."/>
            <person name="Unseld M."/>
            <person name="Fartmann B."/>
            <person name="Valle G."/>
            <person name="Bloecker H."/>
            <person name="Perez-Alonso M."/>
            <person name="Obermaier B."/>
            <person name="Delseny M."/>
            <person name="Boutry M."/>
            <person name="Grivell L.A."/>
            <person name="Mache R."/>
            <person name="Puigdomenech P."/>
            <person name="De Simone V."/>
            <person name="Choisne N."/>
            <person name="Artiguenave F."/>
            <person name="Robert C."/>
            <person name="Brottier P."/>
            <person name="Wincker P."/>
            <person name="Cattolico L."/>
            <person name="Weissenbach J."/>
            <person name="Saurin W."/>
            <person name="Quetier F."/>
            <person name="Schaefer M."/>
            <person name="Mueller-Auer S."/>
            <person name="Gabel C."/>
            <person name="Fuchs M."/>
            <person name="Benes V."/>
            <person name="Wurmbach E."/>
            <person name="Drzonek H."/>
            <person name="Erfle H."/>
            <person name="Jordan N."/>
            <person name="Bangert S."/>
            <person name="Wiedelmann R."/>
            <person name="Kranz H."/>
            <person name="Voss H."/>
            <person name="Holland R."/>
            <person name="Brandt P."/>
            <person name="Nyakatura G."/>
            <person name="Vezzi A."/>
            <person name="D'Angelo M."/>
            <person name="Pallavicini A."/>
            <person name="Toppo S."/>
            <person name="Simionati B."/>
            <person name="Conrad A."/>
            <person name="Hornischer K."/>
            <person name="Kauer G."/>
            <person name="Loehnert T.-H."/>
            <person name="Nordsiek G."/>
            <person name="Reichelt J."/>
            <person name="Scharfe M."/>
            <person name="Schoen O."/>
            <person name="Bargues M."/>
            <person name="Terol J."/>
            <person name="Climent J."/>
            <person name="Navarro P."/>
            <person name="Collado C."/>
            <person name="Perez-Perez A."/>
            <person name="Ottenwaelder B."/>
            <person name="Duchemin D."/>
            <person name="Cooke R."/>
            <person name="Laudie M."/>
            <person name="Berger-Llauro C."/>
            <person name="Purnelle B."/>
            <person name="Masuy D."/>
            <person name="de Haan M."/>
            <person name="Maarse A.C."/>
            <person name="Alcaraz J.-P."/>
            <person name="Cottet A."/>
            <person name="Casacuberta E."/>
            <person name="Monfort A."/>
            <person name="Argiriou A."/>
            <person name="Flores M."/>
            <person name="Liguori R."/>
            <person name="Vitale D."/>
            <person name="Mannhaupt G."/>
            <person name="Haase D."/>
            <person name="Schoof H."/>
            <person name="Rudd S."/>
            <person name="Zaccaria P."/>
            <person name="Mewes H.-W."/>
            <person name="Mayer K.F.X."/>
            <person name="Kaul S."/>
            <person name="Town C.D."/>
            <person name="Koo H.L."/>
            <person name="Tallon L.J."/>
            <person name="Jenkins J."/>
            <person name="Rooney T."/>
            <person name="Rizzo M."/>
            <person name="Walts A."/>
            <person name="Utterback T."/>
            <person name="Fujii C.Y."/>
            <person name="Shea T.P."/>
            <person name="Creasy T.H."/>
            <person name="Haas B."/>
            <person name="Maiti R."/>
            <person name="Wu D."/>
            <person name="Peterson J."/>
            <person name="Van Aken S."/>
            <person name="Pai G."/>
            <person name="Militscher J."/>
            <person name="Sellers P."/>
            <person name="Gill J.E."/>
            <person name="Feldblyum T.V."/>
            <person name="Preuss D."/>
            <person name="Lin X."/>
            <person name="Nierman W.C."/>
            <person name="Salzberg S.L."/>
            <person name="White O."/>
            <person name="Venter J.C."/>
            <person name="Fraser C.M."/>
            <person name="Kaneko T."/>
            <person name="Nakamura Y."/>
            <person name="Sato S."/>
            <person name="Kato T."/>
            <person name="Asamizu E."/>
            <person name="Sasamoto S."/>
            <person name="Kimura T."/>
            <person name="Idesawa K."/>
            <person name="Kawashima K."/>
            <person name="Kishida Y."/>
            <person name="Kiyokawa C."/>
            <person name="Kohara M."/>
            <person name="Matsumoto M."/>
            <person name="Matsuno A."/>
            <person name="Muraki A."/>
            <person name="Nakayama S."/>
            <person name="Nakazaki N."/>
            <person name="Shinpo S."/>
            <person name="Takeuchi C."/>
            <person name="Wada T."/>
            <person name="Watanabe A."/>
            <person name="Yamada M."/>
            <person name="Yasuda M."/>
            <person name="Tabata S."/>
        </authorList>
    </citation>
    <scope>NUCLEOTIDE SEQUENCE [LARGE SCALE GENOMIC DNA]</scope>
    <source>
        <strain>cv. Columbia</strain>
    </source>
</reference>
<reference key="3">
    <citation type="journal article" date="2017" name="Plant J.">
        <title>Araport11: a complete reannotation of the Arabidopsis thaliana reference genome.</title>
        <authorList>
            <person name="Cheng C.Y."/>
            <person name="Krishnakumar V."/>
            <person name="Chan A.P."/>
            <person name="Thibaud-Nissen F."/>
            <person name="Schobel S."/>
            <person name="Town C.D."/>
        </authorList>
    </citation>
    <scope>GENOME REANNOTATION</scope>
    <source>
        <strain>cv. Columbia</strain>
    </source>
</reference>
<reference key="4">
    <citation type="journal article" date="2003" name="Science">
        <title>Empirical analysis of transcriptional activity in the Arabidopsis genome.</title>
        <authorList>
            <person name="Yamada K."/>
            <person name="Lim J."/>
            <person name="Dale J.M."/>
            <person name="Chen H."/>
            <person name="Shinn P."/>
            <person name="Palm C.J."/>
            <person name="Southwick A.M."/>
            <person name="Wu H.C."/>
            <person name="Kim C.J."/>
            <person name="Nguyen M."/>
            <person name="Pham P.K."/>
            <person name="Cheuk R.F."/>
            <person name="Karlin-Newmann G."/>
            <person name="Liu S.X."/>
            <person name="Lam B."/>
            <person name="Sakano H."/>
            <person name="Wu T."/>
            <person name="Yu G."/>
            <person name="Miranda M."/>
            <person name="Quach H.L."/>
            <person name="Tripp M."/>
            <person name="Chang C.H."/>
            <person name="Lee J.M."/>
            <person name="Toriumi M.J."/>
            <person name="Chan M.M."/>
            <person name="Tang C.C."/>
            <person name="Onodera C.S."/>
            <person name="Deng J.M."/>
            <person name="Akiyama K."/>
            <person name="Ansari Y."/>
            <person name="Arakawa T."/>
            <person name="Banh J."/>
            <person name="Banno F."/>
            <person name="Bowser L."/>
            <person name="Brooks S.Y."/>
            <person name="Carninci P."/>
            <person name="Chao Q."/>
            <person name="Choy N."/>
            <person name="Enju A."/>
            <person name="Goldsmith A.D."/>
            <person name="Gurjal M."/>
            <person name="Hansen N.F."/>
            <person name="Hayashizaki Y."/>
            <person name="Johnson-Hopson C."/>
            <person name="Hsuan V.W."/>
            <person name="Iida K."/>
            <person name="Karnes M."/>
            <person name="Khan S."/>
            <person name="Koesema E."/>
            <person name="Ishida J."/>
            <person name="Jiang P.X."/>
            <person name="Jones T."/>
            <person name="Kawai J."/>
            <person name="Kamiya A."/>
            <person name="Meyers C."/>
            <person name="Nakajima M."/>
            <person name="Narusaka M."/>
            <person name="Seki M."/>
            <person name="Sakurai T."/>
            <person name="Satou M."/>
            <person name="Tamse R."/>
            <person name="Vaysberg M."/>
            <person name="Wallender E.K."/>
            <person name="Wong C."/>
            <person name="Yamamura Y."/>
            <person name="Yuan S."/>
            <person name="Shinozaki K."/>
            <person name="Davis R.W."/>
            <person name="Theologis A."/>
            <person name="Ecker J.R."/>
        </authorList>
    </citation>
    <scope>NUCLEOTIDE SEQUENCE [LARGE SCALE MRNA] (ISOFORM 1)</scope>
    <source>
        <strain>cv. Columbia</strain>
    </source>
</reference>
<reference key="5">
    <citation type="journal article" date="2004" name="Genome Res.">
        <title>Whole genome sequence comparisons and 'full-length' cDNA sequences: a combined approach to evaluate and improve Arabidopsis genome annotation.</title>
        <authorList>
            <person name="Castelli V."/>
            <person name="Aury J.-M."/>
            <person name="Jaillon O."/>
            <person name="Wincker P."/>
            <person name="Clepet C."/>
            <person name="Menard M."/>
            <person name="Cruaud C."/>
            <person name="Quetier F."/>
            <person name="Scarpelli C."/>
            <person name="Schaechter V."/>
            <person name="Temple G."/>
            <person name="Caboche M."/>
            <person name="Weissenbach J."/>
            <person name="Salanoubat M."/>
        </authorList>
    </citation>
    <scope>NUCLEOTIDE SEQUENCE [LARGE SCALE MRNA] (ISOFORMS 2 AND 3)</scope>
    <source>
        <strain>cv. Columbia</strain>
    </source>
</reference>
<reference key="6">
    <citation type="submission" date="2002-03" db="EMBL/GenBank/DDBJ databases">
        <title>Full-length cDNA from Arabidopsis thaliana.</title>
        <authorList>
            <person name="Brover V.V."/>
            <person name="Troukhan M.E."/>
            <person name="Alexandrov N.A."/>
            <person name="Lu Y.-P."/>
            <person name="Flavell R.B."/>
            <person name="Feldmann K.A."/>
        </authorList>
    </citation>
    <scope>NUCLEOTIDE SEQUENCE [LARGE SCALE MRNA] (ISOFORM 1)</scope>
</reference>
<reference key="7">
    <citation type="journal article" date="2009" name="DNA Res.">
        <title>Analysis of multiple occurrences of alternative splicing events in Arabidopsis thaliana using novel sequenced full-length cDNAs.</title>
        <authorList>
            <person name="Iida K."/>
            <person name="Fukami-Kobayashi K."/>
            <person name="Toyoda A."/>
            <person name="Sakaki Y."/>
            <person name="Kobayashi M."/>
            <person name="Seki M."/>
            <person name="Shinozaki K."/>
        </authorList>
    </citation>
    <scope>NUCLEOTIDE SEQUENCE [LARGE SCALE MRNA] OF 128-256 (ISOFORM 1)</scope>
    <source>
        <strain>cv. Columbia</strain>
    </source>
</reference>
<reference key="8">
    <citation type="journal article" date="2005" name="Plant Cell">
        <title>Selective membrane protein internalization accompanies movement from the endoplasmic reticulum to the protein storage vacuole pathway in Arabidopsis.</title>
        <authorList>
            <person name="Oufattole M."/>
            <person name="Park J.H."/>
            <person name="Poxleitner M."/>
            <person name="Jiang L."/>
            <person name="Rogers J.C."/>
        </authorList>
    </citation>
    <scope>SUBCELLULAR LOCATION</scope>
</reference>
<reference key="9">
    <citation type="journal article" date="2008" name="J. Proteome Res.">
        <title>Site-specific phosphorylation profiling of Arabidopsis proteins by mass spectrometry and peptide chip analysis.</title>
        <authorList>
            <person name="de la Fuente van Bentem S."/>
            <person name="Anrather D."/>
            <person name="Dohnal I."/>
            <person name="Roitinger E."/>
            <person name="Csaszar E."/>
            <person name="Joore J."/>
            <person name="Buijnink J."/>
            <person name="Carreri A."/>
            <person name="Forzani C."/>
            <person name="Lorkovic Z.J."/>
            <person name="Barta A."/>
            <person name="Lecourieux D."/>
            <person name="Verhounig A."/>
            <person name="Jonak C."/>
            <person name="Hirt H."/>
        </authorList>
    </citation>
    <scope>IDENTIFICATION BY MASS SPECTROMETRY [LARGE SCALE ANALYSIS]</scope>
    <source>
        <tissue>Root</tissue>
    </source>
</reference>
<reference key="10">
    <citation type="journal article" date="2009" name="J. Proteomics">
        <title>Phosphoproteomic analysis of nuclei-enriched fractions from Arabidopsis thaliana.</title>
        <authorList>
            <person name="Jones A.M.E."/>
            <person name="MacLean D."/>
            <person name="Studholme D.J."/>
            <person name="Serna-Sanz A."/>
            <person name="Andreasson E."/>
            <person name="Rathjen J.P."/>
            <person name="Peck S.C."/>
        </authorList>
    </citation>
    <scope>IDENTIFICATION BY MASS SPECTROMETRY [LARGE SCALE ANALYSIS]</scope>
    <source>
        <strain>cv. Columbia</strain>
    </source>
</reference>
<reference key="11">
    <citation type="journal article" date="2009" name="Plant Physiol.">
        <title>Large-scale Arabidopsis phosphoproteome profiling reveals novel chloroplast kinase substrates and phosphorylation networks.</title>
        <authorList>
            <person name="Reiland S."/>
            <person name="Messerli G."/>
            <person name="Baerenfaller K."/>
            <person name="Gerrits B."/>
            <person name="Endler A."/>
            <person name="Grossmann J."/>
            <person name="Gruissem W."/>
            <person name="Baginsky S."/>
        </authorList>
    </citation>
    <scope>IDENTIFICATION BY MASS SPECTROMETRY [LARGE SCALE ANALYSIS]</scope>
</reference>
<reference key="12">
    <citation type="journal article" date="2012" name="Mol. Cell. Proteomics">
        <title>Comparative large-scale characterisation of plant vs. mammal proteins reveals similar and idiosyncratic N-alpha acetylation features.</title>
        <authorList>
            <person name="Bienvenut W.V."/>
            <person name="Sumpton D."/>
            <person name="Martinez A."/>
            <person name="Lilla S."/>
            <person name="Espagne C."/>
            <person name="Meinnel T."/>
            <person name="Giglione C."/>
        </authorList>
    </citation>
    <scope>ACETYLATION [LARGE SCALE ANALYSIS] AT SER-2</scope>
    <scope>CLEAVAGE OF INITIATOR METHIONINE [LARGE SCALE ANALYSIS]</scope>
    <scope>IDENTIFICATION BY MASS SPECTROMETRY [LARGE SCALE ANALYSIS]</scope>
</reference>
<reference key="13">
    <citation type="journal article" date="2014" name="Curr. Biol.">
        <title>The plant cytoskeleton, NET3C, and VAP27 mediate the link between the plasma membrane and endoplasmic reticulum.</title>
        <authorList>
            <person name="Wang P."/>
            <person name="Hawkins T.J."/>
            <person name="Richardson C."/>
            <person name="Cummins I."/>
            <person name="Deeks M.J."/>
            <person name="Sparkes I."/>
            <person name="Hawes C."/>
            <person name="Hussey P.J."/>
        </authorList>
    </citation>
    <scope>FUNCTION</scope>
    <scope>SUBCELLULAR LOCATION</scope>
    <scope>SUBUNIT</scope>
    <scope>INTERACTION WITH NET3C</scope>
    <scope>MUTAGENESIS OF 59-LYS--TYR-61</scope>
</reference>
<sequence length="256" mass="28473">MSNIDLIGMSNRDLIGMSNSELLTVEPLDLQFPFELKKQISCSLYLTNKTDNNVAFKVKTTNPKKYCVRPNTGVVLPRSTCEVLVTMQAQKEAPSDMQCKDKFLLQGVIASPGVTAKEVTPEMFSKEAGHRVEETKLRVTYVAPPRPPSPVHEGSEEGSSPRASVSDNGHGSEFSFERFIVDNKAGHQENTSEARALITKLTEEKQSAIQLNNRLQRELDQLRRESKKSQSGGIPFMYVLLVGLIGLILGYIMKRT</sequence>